<comment type="function">
    <text evidence="1">Displays ATPase and GTPase activities.</text>
</comment>
<comment type="similarity">
    <text evidence="1">Belongs to the RapZ-like family.</text>
</comment>
<proteinExistence type="inferred from homology"/>
<organism>
    <name type="scientific">Delftia acidovorans (strain DSM 14801 / SPH-1)</name>
    <dbReference type="NCBI Taxonomy" id="398578"/>
    <lineage>
        <taxon>Bacteria</taxon>
        <taxon>Pseudomonadati</taxon>
        <taxon>Pseudomonadota</taxon>
        <taxon>Betaproteobacteria</taxon>
        <taxon>Burkholderiales</taxon>
        <taxon>Comamonadaceae</taxon>
        <taxon>Delftia</taxon>
    </lineage>
</organism>
<keyword id="KW-0067">ATP-binding</keyword>
<keyword id="KW-0342">GTP-binding</keyword>
<keyword id="KW-0547">Nucleotide-binding</keyword>
<keyword id="KW-1185">Reference proteome</keyword>
<protein>
    <recommendedName>
        <fullName evidence="1">Nucleotide-binding protein Daci_5422</fullName>
    </recommendedName>
</protein>
<sequence>MSLEIVLITGMSGSGKSVALHALEDAGYYCVDNLPPELLSAFVELEHGRHSNKVAIAMDARSAGGLPHLPGQLERLQRQGVVPHLVFLDATTGTLVRRFSETRRRHPLSQGPVAEGRRALVQDIETERELLGDLREKSHVIDTSHLRSSQLQSYIKELIAAPVGQMTLVFQSFGFKHGLPSDSDYVFDVRMLPNPHYEPQLRPLTGMDAPVAEFLRQQPGVDQMRRDIQQFLESWLDMMASNHRSYVTVAIGCTGGQHRSVFLVEELARHFAPRWPTLCRHRSLDSRPTLKPADLLAHDV</sequence>
<gene>
    <name type="ordered locus">Daci_5422</name>
</gene>
<accession>A9BP06</accession>
<name>Y5422_DELAS</name>
<dbReference type="EMBL" id="CP000884">
    <property type="protein sequence ID" value="ABX38051.1"/>
    <property type="molecule type" value="Genomic_DNA"/>
</dbReference>
<dbReference type="SMR" id="A9BP06"/>
<dbReference type="STRING" id="398578.Daci_5422"/>
<dbReference type="GeneID" id="24114889"/>
<dbReference type="KEGG" id="dac:Daci_5422"/>
<dbReference type="eggNOG" id="COG1660">
    <property type="taxonomic scope" value="Bacteria"/>
</dbReference>
<dbReference type="HOGENOM" id="CLU_059558_1_1_4"/>
<dbReference type="Proteomes" id="UP000000784">
    <property type="component" value="Chromosome"/>
</dbReference>
<dbReference type="GO" id="GO:0005524">
    <property type="term" value="F:ATP binding"/>
    <property type="evidence" value="ECO:0007669"/>
    <property type="project" value="UniProtKB-UniRule"/>
</dbReference>
<dbReference type="GO" id="GO:0005525">
    <property type="term" value="F:GTP binding"/>
    <property type="evidence" value="ECO:0007669"/>
    <property type="project" value="UniProtKB-UniRule"/>
</dbReference>
<dbReference type="Gene3D" id="3.40.50.300">
    <property type="entry name" value="P-loop containing nucleotide triphosphate hydrolases"/>
    <property type="match status" value="1"/>
</dbReference>
<dbReference type="HAMAP" id="MF_00636">
    <property type="entry name" value="RapZ_like"/>
    <property type="match status" value="1"/>
</dbReference>
<dbReference type="InterPro" id="IPR027417">
    <property type="entry name" value="P-loop_NTPase"/>
</dbReference>
<dbReference type="InterPro" id="IPR005337">
    <property type="entry name" value="RapZ-like"/>
</dbReference>
<dbReference type="InterPro" id="IPR053930">
    <property type="entry name" value="RapZ-like_N"/>
</dbReference>
<dbReference type="InterPro" id="IPR053931">
    <property type="entry name" value="RapZ_C"/>
</dbReference>
<dbReference type="NCBIfam" id="NF003828">
    <property type="entry name" value="PRK05416.1"/>
    <property type="match status" value="1"/>
</dbReference>
<dbReference type="PANTHER" id="PTHR30448">
    <property type="entry name" value="RNASE ADAPTER PROTEIN RAPZ"/>
    <property type="match status" value="1"/>
</dbReference>
<dbReference type="PANTHER" id="PTHR30448:SF0">
    <property type="entry name" value="RNASE ADAPTER PROTEIN RAPZ"/>
    <property type="match status" value="1"/>
</dbReference>
<dbReference type="Pfam" id="PF22740">
    <property type="entry name" value="PapZ_C"/>
    <property type="match status" value="1"/>
</dbReference>
<dbReference type="Pfam" id="PF03668">
    <property type="entry name" value="RapZ-like_N"/>
    <property type="match status" value="1"/>
</dbReference>
<dbReference type="PIRSF" id="PIRSF005052">
    <property type="entry name" value="P-loopkin"/>
    <property type="match status" value="1"/>
</dbReference>
<dbReference type="SUPFAM" id="SSF52540">
    <property type="entry name" value="P-loop containing nucleoside triphosphate hydrolases"/>
    <property type="match status" value="1"/>
</dbReference>
<feature type="chain" id="PRO_0000383233" description="Nucleotide-binding protein Daci_5422">
    <location>
        <begin position="1"/>
        <end position="300"/>
    </location>
</feature>
<feature type="binding site" evidence="1">
    <location>
        <begin position="10"/>
        <end position="17"/>
    </location>
    <ligand>
        <name>ATP</name>
        <dbReference type="ChEBI" id="CHEBI:30616"/>
    </ligand>
</feature>
<feature type="binding site" evidence="1">
    <location>
        <begin position="59"/>
        <end position="62"/>
    </location>
    <ligand>
        <name>GTP</name>
        <dbReference type="ChEBI" id="CHEBI:37565"/>
    </ligand>
</feature>
<evidence type="ECO:0000255" key="1">
    <source>
        <dbReference type="HAMAP-Rule" id="MF_00636"/>
    </source>
</evidence>
<reference key="1">
    <citation type="submission" date="2007-11" db="EMBL/GenBank/DDBJ databases">
        <title>Complete sequence of Delftia acidovorans DSM 14801 / SPH-1.</title>
        <authorList>
            <person name="Copeland A."/>
            <person name="Lucas S."/>
            <person name="Lapidus A."/>
            <person name="Barry K."/>
            <person name="Glavina del Rio T."/>
            <person name="Dalin E."/>
            <person name="Tice H."/>
            <person name="Pitluck S."/>
            <person name="Lowry S."/>
            <person name="Clum A."/>
            <person name="Schmutz J."/>
            <person name="Larimer F."/>
            <person name="Land M."/>
            <person name="Hauser L."/>
            <person name="Kyrpides N."/>
            <person name="Kim E."/>
            <person name="Schleheck D."/>
            <person name="Richardson P."/>
        </authorList>
    </citation>
    <scope>NUCLEOTIDE SEQUENCE [LARGE SCALE GENOMIC DNA]</scope>
    <source>
        <strain>DSM 14801 / SPH-1</strain>
    </source>
</reference>